<keyword id="KW-0433">Leucine-rich repeat</keyword>
<keyword id="KW-1267">Proteomics identification</keyword>
<keyword id="KW-1185">Reference proteome</keyword>
<keyword id="KW-0677">Repeat</keyword>
<accession>Q05C16</accession>
<accession>A0A7D9NKF2</accession>
<accession>Q5TBN0</accession>
<comment type="sequence caution" evidence="3">
    <conflict type="miscellaneous discrepancy">
        <sequence resource="EMBL-CDS" id="AAH30276"/>
    </conflict>
    <text>Contaminating sequence. Potential poly-A sequence.</text>
</comment>
<organism>
    <name type="scientific">Homo sapiens</name>
    <name type="common">Human</name>
    <dbReference type="NCBI Taxonomy" id="9606"/>
    <lineage>
        <taxon>Eukaryota</taxon>
        <taxon>Metazoa</taxon>
        <taxon>Chordata</taxon>
        <taxon>Craniata</taxon>
        <taxon>Vertebrata</taxon>
        <taxon>Euteleostomi</taxon>
        <taxon>Mammalia</taxon>
        <taxon>Eutheria</taxon>
        <taxon>Euarchontoglires</taxon>
        <taxon>Primates</taxon>
        <taxon>Haplorrhini</taxon>
        <taxon>Catarrhini</taxon>
        <taxon>Hominidae</taxon>
        <taxon>Homo</taxon>
    </lineage>
</organism>
<feature type="chain" id="PRO_0000320628" description="Leucine-rich repeat-containing protein 63">
    <location>
        <begin position="1"/>
        <end position="587"/>
    </location>
</feature>
<feature type="repeat" description="LRR 1" evidence="1">
    <location>
        <begin position="251"/>
        <end position="274"/>
    </location>
</feature>
<feature type="repeat" description="LRR 2" evidence="1">
    <location>
        <begin position="344"/>
        <end position="367"/>
    </location>
</feature>
<feature type="repeat" description="LRR 3" evidence="1">
    <location>
        <begin position="368"/>
        <end position="390"/>
    </location>
</feature>
<feature type="repeat" description="LRR 4" evidence="1">
    <location>
        <begin position="392"/>
        <end position="413"/>
    </location>
</feature>
<feature type="repeat" description="LRR 5" evidence="1">
    <location>
        <begin position="414"/>
        <end position="436"/>
    </location>
</feature>
<feature type="repeat" description="LRR 6" evidence="1">
    <location>
        <begin position="437"/>
        <end position="459"/>
    </location>
</feature>
<feature type="repeat" description="LRR 7" evidence="1">
    <location>
        <begin position="487"/>
        <end position="510"/>
    </location>
</feature>
<feature type="sequence variant" id="VAR_039236" description="In dbSNP:rs7338697." evidence="2">
    <original>M</original>
    <variation>V</variation>
    <location>
        <position position="137"/>
    </location>
</feature>
<feature type="sequence variant" id="VAR_039237" description="In dbSNP:rs6561303." evidence="2">
    <original>M</original>
    <variation>V</variation>
    <location>
        <position position="206"/>
    </location>
</feature>
<feature type="sequence variant" id="VAR_039238" description="In dbSNP:rs12865423.">
    <original>K</original>
    <variation>R</variation>
    <location>
        <position position="281"/>
    </location>
</feature>
<feature type="sequence variant" id="VAR_039239" description="In dbSNP:rs12865424.">
    <original>T</original>
    <variation>A</variation>
    <location>
        <position position="282"/>
    </location>
</feature>
<dbReference type="EMBL" id="AL137141">
    <property type="status" value="NOT_ANNOTATED_CDS"/>
    <property type="molecule type" value="Genomic_DNA"/>
</dbReference>
<dbReference type="EMBL" id="AL139801">
    <property type="status" value="NOT_ANNOTATED_CDS"/>
    <property type="molecule type" value="Genomic_DNA"/>
</dbReference>
<dbReference type="EMBL" id="BC030276">
    <property type="protein sequence ID" value="AAH30276.1"/>
    <property type="status" value="ALT_SEQ"/>
    <property type="molecule type" value="mRNA"/>
</dbReference>
<dbReference type="CCDS" id="CCDS61325.1"/>
<dbReference type="RefSeq" id="NP_001269389.1">
    <property type="nucleotide sequence ID" value="NM_001282460.2"/>
</dbReference>
<dbReference type="RefSeq" id="XP_016875910.1">
    <property type="nucleotide sequence ID" value="XM_017020421.1"/>
</dbReference>
<dbReference type="RefSeq" id="XP_047286093.1">
    <property type="nucleotide sequence ID" value="XM_047430137.1"/>
</dbReference>
<dbReference type="RefSeq" id="XP_054230172.1">
    <property type="nucleotide sequence ID" value="XM_054374197.1"/>
</dbReference>
<dbReference type="SMR" id="Q05C16"/>
<dbReference type="BioGRID" id="128644">
    <property type="interactions" value="1"/>
</dbReference>
<dbReference type="IntAct" id="Q05C16">
    <property type="interactions" value="1"/>
</dbReference>
<dbReference type="STRING" id="9606.ENSP00000469337"/>
<dbReference type="GlyGen" id="Q05C16">
    <property type="glycosylation" value="2 sites"/>
</dbReference>
<dbReference type="iPTMnet" id="Q05C16"/>
<dbReference type="PhosphoSitePlus" id="Q05C16"/>
<dbReference type="BioMuta" id="LRRC63"/>
<dbReference type="DMDM" id="190359060"/>
<dbReference type="jPOST" id="Q05C16"/>
<dbReference type="MassIVE" id="Q05C16"/>
<dbReference type="PaxDb" id="9606-ENSP00000469337"/>
<dbReference type="PeptideAtlas" id="Q05C16"/>
<dbReference type="DNASU" id="220416"/>
<dbReference type="Ensembl" id="ENST00000595396.3">
    <property type="protein sequence ID" value="ENSP00000469337.1"/>
    <property type="gene ID" value="ENSG00000173988.14"/>
</dbReference>
<dbReference type="GeneID" id="220416"/>
<dbReference type="KEGG" id="hsa:220416"/>
<dbReference type="MANE-Select" id="ENST00000595396.3">
    <property type="protein sequence ID" value="ENSP00000469337.1"/>
    <property type="RefSeq nucleotide sequence ID" value="NM_001282460.2"/>
    <property type="RefSeq protein sequence ID" value="NP_001269389.1"/>
</dbReference>
<dbReference type="UCSC" id="uc058wwl.1">
    <property type="organism name" value="human"/>
</dbReference>
<dbReference type="AGR" id="HGNC:34296"/>
<dbReference type="CTD" id="220416"/>
<dbReference type="DisGeNET" id="220416"/>
<dbReference type="GeneCards" id="LRRC63"/>
<dbReference type="HGNC" id="HGNC:34296">
    <property type="gene designation" value="LRRC63"/>
</dbReference>
<dbReference type="neXtProt" id="NX_Q05C16"/>
<dbReference type="OpenTargets" id="ENSG00000173988"/>
<dbReference type="VEuPathDB" id="HostDB:ENSG00000173988"/>
<dbReference type="eggNOG" id="KOG0619">
    <property type="taxonomic scope" value="Eukaryota"/>
</dbReference>
<dbReference type="GeneTree" id="ENSGT00710000106860"/>
<dbReference type="HOGENOM" id="CLU_027651_0_0_1"/>
<dbReference type="InParanoid" id="Q05C16"/>
<dbReference type="OrthoDB" id="660555at2759"/>
<dbReference type="PAN-GO" id="Q05C16">
    <property type="GO annotations" value="0 GO annotations based on evolutionary models"/>
</dbReference>
<dbReference type="PhylomeDB" id="Q05C16"/>
<dbReference type="PathwayCommons" id="Q05C16"/>
<dbReference type="SignaLink" id="Q05C16"/>
<dbReference type="BioGRID-ORCS" id="220416">
    <property type="hits" value="5 hits in 1009 CRISPR screens"/>
</dbReference>
<dbReference type="ChiTaRS" id="LRRC63">
    <property type="organism name" value="human"/>
</dbReference>
<dbReference type="GenomeRNAi" id="220416"/>
<dbReference type="Pharos" id="Q05C16">
    <property type="development level" value="Tdark"/>
</dbReference>
<dbReference type="PRO" id="PR:Q05C16"/>
<dbReference type="Proteomes" id="UP000005640">
    <property type="component" value="Chromosome 13"/>
</dbReference>
<dbReference type="RNAct" id="Q05C16">
    <property type="molecule type" value="protein"/>
</dbReference>
<dbReference type="Bgee" id="ENSG00000173988">
    <property type="expression patterns" value="Expressed in male germ line stem cell (sensu Vertebrata) in testis and 88 other cell types or tissues"/>
</dbReference>
<dbReference type="ExpressionAtlas" id="Q05C16">
    <property type="expression patterns" value="baseline and differential"/>
</dbReference>
<dbReference type="GO" id="GO:0035556">
    <property type="term" value="P:intracellular signal transduction"/>
    <property type="evidence" value="ECO:0000318"/>
    <property type="project" value="GO_Central"/>
</dbReference>
<dbReference type="Gene3D" id="3.80.10.10">
    <property type="entry name" value="Ribonuclease Inhibitor"/>
    <property type="match status" value="1"/>
</dbReference>
<dbReference type="InterPro" id="IPR001611">
    <property type="entry name" value="Leu-rich_rpt"/>
</dbReference>
<dbReference type="InterPro" id="IPR003591">
    <property type="entry name" value="Leu-rich_rpt_typical-subtyp"/>
</dbReference>
<dbReference type="InterPro" id="IPR032675">
    <property type="entry name" value="LRR_dom_sf"/>
</dbReference>
<dbReference type="InterPro" id="IPR050216">
    <property type="entry name" value="LRR_domain-containing"/>
</dbReference>
<dbReference type="InterPro" id="IPR055414">
    <property type="entry name" value="LRR_R13L4/SHOC2-like"/>
</dbReference>
<dbReference type="PANTHER" id="PTHR48051">
    <property type="match status" value="1"/>
</dbReference>
<dbReference type="PANTHER" id="PTHR48051:SF46">
    <property type="entry name" value="LEUCINE RICH REPEAT-CONTAINING DOMAIN PROTEIN"/>
    <property type="match status" value="1"/>
</dbReference>
<dbReference type="Pfam" id="PF23598">
    <property type="entry name" value="LRR_14"/>
    <property type="match status" value="1"/>
</dbReference>
<dbReference type="SMART" id="SM00369">
    <property type="entry name" value="LRR_TYP"/>
    <property type="match status" value="4"/>
</dbReference>
<dbReference type="SUPFAM" id="SSF52047">
    <property type="entry name" value="RNI-like"/>
    <property type="match status" value="1"/>
</dbReference>
<dbReference type="PROSITE" id="PS51450">
    <property type="entry name" value="LRR"/>
    <property type="match status" value="4"/>
</dbReference>
<evidence type="ECO:0000255" key="1"/>
<evidence type="ECO:0000269" key="2">
    <source>
    </source>
</evidence>
<evidence type="ECO:0000305" key="3"/>
<name>LRC63_HUMAN</name>
<proteinExistence type="evidence at protein level"/>
<protein>
    <recommendedName>
        <fullName>Leucine-rich repeat-containing protein 63</fullName>
    </recommendedName>
</protein>
<gene>
    <name type="primary">LRRC63</name>
</gene>
<reference key="1">
    <citation type="journal article" date="2004" name="Nature">
        <title>The DNA sequence and analysis of human chromosome 13.</title>
        <authorList>
            <person name="Dunham A."/>
            <person name="Matthews L.H."/>
            <person name="Burton J."/>
            <person name="Ashurst J.L."/>
            <person name="Howe K.L."/>
            <person name="Ashcroft K.J."/>
            <person name="Beare D.M."/>
            <person name="Burford D.C."/>
            <person name="Hunt S.E."/>
            <person name="Griffiths-Jones S."/>
            <person name="Jones M.C."/>
            <person name="Keenan S.J."/>
            <person name="Oliver K."/>
            <person name="Scott C.E."/>
            <person name="Ainscough R."/>
            <person name="Almeida J.P."/>
            <person name="Ambrose K.D."/>
            <person name="Andrews D.T."/>
            <person name="Ashwell R.I.S."/>
            <person name="Babbage A.K."/>
            <person name="Bagguley C.L."/>
            <person name="Bailey J."/>
            <person name="Bannerjee R."/>
            <person name="Barlow K.F."/>
            <person name="Bates K."/>
            <person name="Beasley H."/>
            <person name="Bird C.P."/>
            <person name="Bray-Allen S."/>
            <person name="Brown A.J."/>
            <person name="Brown J.Y."/>
            <person name="Burrill W."/>
            <person name="Carder C."/>
            <person name="Carter N.P."/>
            <person name="Chapman J.C."/>
            <person name="Clamp M.E."/>
            <person name="Clark S.Y."/>
            <person name="Clarke G."/>
            <person name="Clee C.M."/>
            <person name="Clegg S.C."/>
            <person name="Cobley V."/>
            <person name="Collins J.E."/>
            <person name="Corby N."/>
            <person name="Coville G.J."/>
            <person name="Deloukas P."/>
            <person name="Dhami P."/>
            <person name="Dunham I."/>
            <person name="Dunn M."/>
            <person name="Earthrowl M.E."/>
            <person name="Ellington A.G."/>
            <person name="Faulkner L."/>
            <person name="Frankish A.G."/>
            <person name="Frankland J."/>
            <person name="French L."/>
            <person name="Garner P."/>
            <person name="Garnett J."/>
            <person name="Gilbert J.G.R."/>
            <person name="Gilson C.J."/>
            <person name="Ghori J."/>
            <person name="Grafham D.V."/>
            <person name="Gribble S.M."/>
            <person name="Griffiths C."/>
            <person name="Hall R.E."/>
            <person name="Hammond S."/>
            <person name="Harley J.L."/>
            <person name="Hart E.A."/>
            <person name="Heath P.D."/>
            <person name="Howden P.J."/>
            <person name="Huckle E.J."/>
            <person name="Hunt P.J."/>
            <person name="Hunt A.R."/>
            <person name="Johnson C."/>
            <person name="Johnson D."/>
            <person name="Kay M."/>
            <person name="Kimberley A.M."/>
            <person name="King A."/>
            <person name="Laird G.K."/>
            <person name="Langford C.J."/>
            <person name="Lawlor S."/>
            <person name="Leongamornlert D.A."/>
            <person name="Lloyd D.M."/>
            <person name="Lloyd C."/>
            <person name="Loveland J.E."/>
            <person name="Lovell J."/>
            <person name="Martin S."/>
            <person name="Mashreghi-Mohammadi M."/>
            <person name="McLaren S.J."/>
            <person name="McMurray A."/>
            <person name="Milne S."/>
            <person name="Moore M.J.F."/>
            <person name="Nickerson T."/>
            <person name="Palmer S.A."/>
            <person name="Pearce A.V."/>
            <person name="Peck A.I."/>
            <person name="Pelan S."/>
            <person name="Phillimore B."/>
            <person name="Porter K.M."/>
            <person name="Rice C.M."/>
            <person name="Searle S."/>
            <person name="Sehra H.K."/>
            <person name="Shownkeen R."/>
            <person name="Skuce C.D."/>
            <person name="Smith M."/>
            <person name="Steward C.A."/>
            <person name="Sycamore N."/>
            <person name="Tester J."/>
            <person name="Thomas D.W."/>
            <person name="Tracey A."/>
            <person name="Tromans A."/>
            <person name="Tubby B."/>
            <person name="Wall M."/>
            <person name="Wallis J.M."/>
            <person name="West A.P."/>
            <person name="Whitehead S.L."/>
            <person name="Willey D.L."/>
            <person name="Wilming L."/>
            <person name="Wray P.W."/>
            <person name="Wright M.W."/>
            <person name="Young L."/>
            <person name="Coulson A."/>
            <person name="Durbin R.M."/>
            <person name="Hubbard T."/>
            <person name="Sulston J.E."/>
            <person name="Beck S."/>
            <person name="Bentley D.R."/>
            <person name="Rogers J."/>
            <person name="Ross M.T."/>
        </authorList>
    </citation>
    <scope>NUCLEOTIDE SEQUENCE [LARGE SCALE GENOMIC DNA]</scope>
</reference>
<reference key="2">
    <citation type="journal article" date="2004" name="Genome Res.">
        <title>The status, quality, and expansion of the NIH full-length cDNA project: the Mammalian Gene Collection (MGC).</title>
        <authorList>
            <consortium name="The MGC Project Team"/>
        </authorList>
    </citation>
    <scope>NUCLEOTIDE SEQUENCE [LARGE SCALE MRNA] OF 1-506</scope>
    <scope>VARIANTS VAL-137 AND VAL-206</scope>
    <source>
        <tissue>Brain</tissue>
    </source>
</reference>
<sequence length="587" mass="67163">MQKPPLLLRRPLPPKFTKLSLHEKKTHTAKTGKIESLHVAFTEDETTSIKMDRTRFPDVLRNQSLTPINIQNIFLDHCVQERVTAISSPQKSTKHVREQIPDTATGSIFFPHCNSASTRIFGKQTNKMESSRKFKTMKDVYTEKRLENILILSSKFSKPKSTPGSVIAQKLEKMHPKHQPLPESPGYTYQHISRDLSATVPSPPPMTVSMKPEGQWPEHFKSTATLTLRVTEFPGFVSLPTPVLPRKPHRQSVIETLVTENGNIESVPKQIPPRPPEGLTKTEKIESEIHVVRGEGFKTVAATRYETITAMTNLAIVNCQVYGRNALNLKGFFILNCPDLTPLAFQLIYLNLSFNDLHYFPTEILCLKNLQILKLRNNPIKEIPSEIQQLEFLRIFTIAFNLITVLPIGLFSLSYLEELDVSYNELTFIPNEIQKLRSLEKLTVDGNELSFFPHGILKLNLTKIQFENNFTHPCFWRDNYLNNPQQLTQIISLFIVQNKLHKFYDKIPVEVQKLLKCTSRCEWCHGPKFGEGFRVIRSCDIFGASQLPVMFYVCSPSCYRRIKESSFVLDGSPSRRIALDVELSKEL</sequence>